<sequence length="216" mass="23700">MRIILLGPPGAGKGTQAVGIVEKYNIPHISTGDIFRKNIKEGTELGKKAKEYMDQGLLVPDELTVGLVTDRISQEDCKNGFMLDGFPRNVAQGEHLDIFLKNAGISLDKVVNIEVDKSILVSRAVGRRICKSCGATYHVEFNPPKVEGVCDVCQGELYQRADDNEETVSKRIQVYLDETKPLVDYYSKQGIIADIKGDQAIDKVFEDIVAALGSGK</sequence>
<comment type="function">
    <text evidence="1">Catalyzes the reversible transfer of the terminal phosphate group between ATP and AMP. Plays an important role in cellular energy homeostasis and in adenine nucleotide metabolism.</text>
</comment>
<comment type="catalytic activity">
    <reaction evidence="1">
        <text>AMP + ATP = 2 ADP</text>
        <dbReference type="Rhea" id="RHEA:12973"/>
        <dbReference type="ChEBI" id="CHEBI:30616"/>
        <dbReference type="ChEBI" id="CHEBI:456215"/>
        <dbReference type="ChEBI" id="CHEBI:456216"/>
        <dbReference type="EC" id="2.7.4.3"/>
    </reaction>
</comment>
<comment type="pathway">
    <text evidence="1">Purine metabolism; AMP biosynthesis via salvage pathway; AMP from ADP: step 1/1.</text>
</comment>
<comment type="subunit">
    <text evidence="1">Monomer.</text>
</comment>
<comment type="subcellular location">
    <subcellularLocation>
        <location evidence="1">Cytoplasm</location>
    </subcellularLocation>
</comment>
<comment type="domain">
    <text evidence="1">Consists of three domains, a large central CORE domain and two small peripheral domains, NMPbind and LID, which undergo movements during catalysis. The LID domain closes over the site of phosphoryl transfer upon ATP binding. Assembling and dissambling the active center during each catalytic cycle provides an effective means to prevent ATP hydrolysis. Some bacteria have evolved a zinc-coordinating structure that stabilizes the LID domain.</text>
</comment>
<comment type="similarity">
    <text evidence="1">Belongs to the adenylate kinase family.</text>
</comment>
<reference key="1">
    <citation type="journal article" date="2006" name="Nat. Genet.">
        <title>The multidrug-resistant human pathogen Clostridium difficile has a highly mobile, mosaic genome.</title>
        <authorList>
            <person name="Sebaihia M."/>
            <person name="Wren B.W."/>
            <person name="Mullany P."/>
            <person name="Fairweather N.F."/>
            <person name="Minton N."/>
            <person name="Stabler R."/>
            <person name="Thomson N.R."/>
            <person name="Roberts A.P."/>
            <person name="Cerdeno-Tarraga A.M."/>
            <person name="Wang H."/>
            <person name="Holden M.T.G."/>
            <person name="Wright A."/>
            <person name="Churcher C."/>
            <person name="Quail M.A."/>
            <person name="Baker S."/>
            <person name="Bason N."/>
            <person name="Brooks K."/>
            <person name="Chillingworth T."/>
            <person name="Cronin A."/>
            <person name="Davis P."/>
            <person name="Dowd L."/>
            <person name="Fraser A."/>
            <person name="Feltwell T."/>
            <person name="Hance Z."/>
            <person name="Holroyd S."/>
            <person name="Jagels K."/>
            <person name="Moule S."/>
            <person name="Mungall K."/>
            <person name="Price C."/>
            <person name="Rabbinowitsch E."/>
            <person name="Sharp S."/>
            <person name="Simmonds M."/>
            <person name="Stevens K."/>
            <person name="Unwin L."/>
            <person name="Whithead S."/>
            <person name="Dupuy B."/>
            <person name="Dougan G."/>
            <person name="Barrell B."/>
            <person name="Parkhill J."/>
        </authorList>
    </citation>
    <scope>NUCLEOTIDE SEQUENCE [LARGE SCALE GENOMIC DNA]</scope>
    <source>
        <strain>630</strain>
    </source>
</reference>
<feature type="chain" id="PRO_1000021721" description="Adenylate kinase">
    <location>
        <begin position="1"/>
        <end position="216"/>
    </location>
</feature>
<feature type="region of interest" description="NMP" evidence="1">
    <location>
        <begin position="30"/>
        <end position="59"/>
    </location>
</feature>
<feature type="region of interest" description="LID" evidence="1">
    <location>
        <begin position="126"/>
        <end position="163"/>
    </location>
</feature>
<feature type="binding site" evidence="1">
    <location>
        <begin position="10"/>
        <end position="15"/>
    </location>
    <ligand>
        <name>ATP</name>
        <dbReference type="ChEBI" id="CHEBI:30616"/>
    </ligand>
</feature>
<feature type="binding site" evidence="1">
    <location>
        <position position="31"/>
    </location>
    <ligand>
        <name>AMP</name>
        <dbReference type="ChEBI" id="CHEBI:456215"/>
    </ligand>
</feature>
<feature type="binding site" evidence="1">
    <location>
        <position position="36"/>
    </location>
    <ligand>
        <name>AMP</name>
        <dbReference type="ChEBI" id="CHEBI:456215"/>
    </ligand>
</feature>
<feature type="binding site" evidence="1">
    <location>
        <begin position="57"/>
        <end position="59"/>
    </location>
    <ligand>
        <name>AMP</name>
        <dbReference type="ChEBI" id="CHEBI:456215"/>
    </ligand>
</feature>
<feature type="binding site" evidence="1">
    <location>
        <begin position="85"/>
        <end position="88"/>
    </location>
    <ligand>
        <name>AMP</name>
        <dbReference type="ChEBI" id="CHEBI:456215"/>
    </ligand>
</feature>
<feature type="binding site" evidence="1">
    <location>
        <position position="92"/>
    </location>
    <ligand>
        <name>AMP</name>
        <dbReference type="ChEBI" id="CHEBI:456215"/>
    </ligand>
</feature>
<feature type="binding site" evidence="1">
    <location>
        <position position="127"/>
    </location>
    <ligand>
        <name>ATP</name>
        <dbReference type="ChEBI" id="CHEBI:30616"/>
    </ligand>
</feature>
<feature type="binding site" evidence="1">
    <location>
        <position position="130"/>
    </location>
    <ligand>
        <name>Zn(2+)</name>
        <dbReference type="ChEBI" id="CHEBI:29105"/>
        <note>structural</note>
    </ligand>
</feature>
<feature type="binding site" evidence="1">
    <location>
        <position position="133"/>
    </location>
    <ligand>
        <name>Zn(2+)</name>
        <dbReference type="ChEBI" id="CHEBI:29105"/>
        <note>structural</note>
    </ligand>
</feature>
<feature type="binding site" evidence="1">
    <location>
        <begin position="136"/>
        <end position="137"/>
    </location>
    <ligand>
        <name>ATP</name>
        <dbReference type="ChEBI" id="CHEBI:30616"/>
    </ligand>
</feature>
<feature type="binding site" evidence="1">
    <location>
        <position position="150"/>
    </location>
    <ligand>
        <name>Zn(2+)</name>
        <dbReference type="ChEBI" id="CHEBI:29105"/>
        <note>structural</note>
    </ligand>
</feature>
<feature type="binding site" evidence="1">
    <location>
        <position position="153"/>
    </location>
    <ligand>
        <name>Zn(2+)</name>
        <dbReference type="ChEBI" id="CHEBI:29105"/>
        <note>structural</note>
    </ligand>
</feature>
<feature type="binding site" evidence="1">
    <location>
        <position position="160"/>
    </location>
    <ligand>
        <name>AMP</name>
        <dbReference type="ChEBI" id="CHEBI:456215"/>
    </ligand>
</feature>
<feature type="binding site" evidence="1">
    <location>
        <position position="171"/>
    </location>
    <ligand>
        <name>AMP</name>
        <dbReference type="ChEBI" id="CHEBI:456215"/>
    </ligand>
</feature>
<feature type="binding site" evidence="1">
    <location>
        <position position="199"/>
    </location>
    <ligand>
        <name>ATP</name>
        <dbReference type="ChEBI" id="CHEBI:30616"/>
    </ligand>
</feature>
<accession>Q18CH9</accession>
<proteinExistence type="inferred from homology"/>
<dbReference type="EC" id="2.7.4.3" evidence="1"/>
<dbReference type="EMBL" id="AM180355">
    <property type="protein sequence ID" value="CAJ66909.1"/>
    <property type="molecule type" value="Genomic_DNA"/>
</dbReference>
<dbReference type="RefSeq" id="WP_011860634.1">
    <property type="nucleotide sequence ID" value="NC_009089.1"/>
</dbReference>
<dbReference type="RefSeq" id="YP_001086558.1">
    <property type="nucleotide sequence ID" value="NC_009089.1"/>
</dbReference>
<dbReference type="SMR" id="Q18CH9"/>
<dbReference type="STRING" id="272563.CD630_00910"/>
<dbReference type="EnsemblBacteria" id="CAJ66909">
    <property type="protein sequence ID" value="CAJ66909"/>
    <property type="gene ID" value="CD630_00910"/>
</dbReference>
<dbReference type="KEGG" id="cdf:CD630_00910"/>
<dbReference type="KEGG" id="pdc:CDIF630_00160"/>
<dbReference type="PATRIC" id="fig|272563.120.peg.100"/>
<dbReference type="eggNOG" id="COG0563">
    <property type="taxonomic scope" value="Bacteria"/>
</dbReference>
<dbReference type="OrthoDB" id="9805030at2"/>
<dbReference type="PhylomeDB" id="Q18CH9"/>
<dbReference type="BioCyc" id="PDIF272563:G12WB-148-MONOMER"/>
<dbReference type="UniPathway" id="UPA00588">
    <property type="reaction ID" value="UER00649"/>
</dbReference>
<dbReference type="Proteomes" id="UP000001978">
    <property type="component" value="Chromosome"/>
</dbReference>
<dbReference type="GO" id="GO:0005737">
    <property type="term" value="C:cytoplasm"/>
    <property type="evidence" value="ECO:0007669"/>
    <property type="project" value="UniProtKB-SubCell"/>
</dbReference>
<dbReference type="GO" id="GO:0004017">
    <property type="term" value="F:adenylate kinase activity"/>
    <property type="evidence" value="ECO:0007669"/>
    <property type="project" value="UniProtKB-UniRule"/>
</dbReference>
<dbReference type="GO" id="GO:0005524">
    <property type="term" value="F:ATP binding"/>
    <property type="evidence" value="ECO:0007669"/>
    <property type="project" value="UniProtKB-UniRule"/>
</dbReference>
<dbReference type="GO" id="GO:0008270">
    <property type="term" value="F:zinc ion binding"/>
    <property type="evidence" value="ECO:0007669"/>
    <property type="project" value="UniProtKB-UniRule"/>
</dbReference>
<dbReference type="GO" id="GO:0044209">
    <property type="term" value="P:AMP salvage"/>
    <property type="evidence" value="ECO:0007669"/>
    <property type="project" value="UniProtKB-UniRule"/>
</dbReference>
<dbReference type="CDD" id="cd01428">
    <property type="entry name" value="ADK"/>
    <property type="match status" value="1"/>
</dbReference>
<dbReference type="FunFam" id="3.40.50.300:FF:000106">
    <property type="entry name" value="Adenylate kinase mitochondrial"/>
    <property type="match status" value="1"/>
</dbReference>
<dbReference type="Gene3D" id="3.40.50.300">
    <property type="entry name" value="P-loop containing nucleotide triphosphate hydrolases"/>
    <property type="match status" value="1"/>
</dbReference>
<dbReference type="HAMAP" id="MF_00235">
    <property type="entry name" value="Adenylate_kinase_Adk"/>
    <property type="match status" value="1"/>
</dbReference>
<dbReference type="InterPro" id="IPR006259">
    <property type="entry name" value="Adenyl_kin_sub"/>
</dbReference>
<dbReference type="InterPro" id="IPR000850">
    <property type="entry name" value="Adenylat/UMP-CMP_kin"/>
</dbReference>
<dbReference type="InterPro" id="IPR033690">
    <property type="entry name" value="Adenylat_kinase_CS"/>
</dbReference>
<dbReference type="InterPro" id="IPR007862">
    <property type="entry name" value="Adenylate_kinase_lid-dom"/>
</dbReference>
<dbReference type="InterPro" id="IPR027417">
    <property type="entry name" value="P-loop_NTPase"/>
</dbReference>
<dbReference type="NCBIfam" id="TIGR01351">
    <property type="entry name" value="adk"/>
    <property type="match status" value="1"/>
</dbReference>
<dbReference type="NCBIfam" id="NF001380">
    <property type="entry name" value="PRK00279.1-2"/>
    <property type="match status" value="1"/>
</dbReference>
<dbReference type="NCBIfam" id="NF001381">
    <property type="entry name" value="PRK00279.1-3"/>
    <property type="match status" value="1"/>
</dbReference>
<dbReference type="NCBIfam" id="NF011100">
    <property type="entry name" value="PRK14527.1"/>
    <property type="match status" value="1"/>
</dbReference>
<dbReference type="PANTHER" id="PTHR23359">
    <property type="entry name" value="NUCLEOTIDE KINASE"/>
    <property type="match status" value="1"/>
</dbReference>
<dbReference type="Pfam" id="PF00406">
    <property type="entry name" value="ADK"/>
    <property type="match status" value="1"/>
</dbReference>
<dbReference type="Pfam" id="PF05191">
    <property type="entry name" value="ADK_lid"/>
    <property type="match status" value="1"/>
</dbReference>
<dbReference type="PRINTS" id="PR00094">
    <property type="entry name" value="ADENYLTKNASE"/>
</dbReference>
<dbReference type="SUPFAM" id="SSF52540">
    <property type="entry name" value="P-loop containing nucleoside triphosphate hydrolases"/>
    <property type="match status" value="1"/>
</dbReference>
<dbReference type="PROSITE" id="PS00113">
    <property type="entry name" value="ADENYLATE_KINASE"/>
    <property type="match status" value="1"/>
</dbReference>
<protein>
    <recommendedName>
        <fullName evidence="1">Adenylate kinase</fullName>
        <shortName evidence="1">AK</shortName>
        <ecNumber evidence="1">2.7.4.3</ecNumber>
    </recommendedName>
    <alternativeName>
        <fullName evidence="1">ATP-AMP transphosphorylase</fullName>
    </alternativeName>
    <alternativeName>
        <fullName evidence="1">ATP:AMP phosphotransferase</fullName>
    </alternativeName>
    <alternativeName>
        <fullName evidence="1">Adenylate monophosphate kinase</fullName>
    </alternativeName>
</protein>
<keyword id="KW-0067">ATP-binding</keyword>
<keyword id="KW-0963">Cytoplasm</keyword>
<keyword id="KW-0418">Kinase</keyword>
<keyword id="KW-0479">Metal-binding</keyword>
<keyword id="KW-0545">Nucleotide biosynthesis</keyword>
<keyword id="KW-0547">Nucleotide-binding</keyword>
<keyword id="KW-1185">Reference proteome</keyword>
<keyword id="KW-0808">Transferase</keyword>
<keyword id="KW-0862">Zinc</keyword>
<name>KAD_CLOD6</name>
<organism>
    <name type="scientific">Clostridioides difficile (strain 630)</name>
    <name type="common">Peptoclostridium difficile</name>
    <dbReference type="NCBI Taxonomy" id="272563"/>
    <lineage>
        <taxon>Bacteria</taxon>
        <taxon>Bacillati</taxon>
        <taxon>Bacillota</taxon>
        <taxon>Clostridia</taxon>
        <taxon>Peptostreptococcales</taxon>
        <taxon>Peptostreptococcaceae</taxon>
        <taxon>Clostridioides</taxon>
    </lineage>
</organism>
<gene>
    <name evidence="1" type="primary">adk</name>
    <name type="ordered locus">CD630_00910</name>
</gene>
<evidence type="ECO:0000255" key="1">
    <source>
        <dbReference type="HAMAP-Rule" id="MF_00235"/>
    </source>
</evidence>